<reference key="1">
    <citation type="journal article" date="2004" name="Nat. Genet.">
        <title>Complete sequencing and characterization of 21,243 full-length human cDNAs.</title>
        <authorList>
            <person name="Ota T."/>
            <person name="Suzuki Y."/>
            <person name="Nishikawa T."/>
            <person name="Otsuki T."/>
            <person name="Sugiyama T."/>
            <person name="Irie R."/>
            <person name="Wakamatsu A."/>
            <person name="Hayashi K."/>
            <person name="Sato H."/>
            <person name="Nagai K."/>
            <person name="Kimura K."/>
            <person name="Makita H."/>
            <person name="Sekine M."/>
            <person name="Obayashi M."/>
            <person name="Nishi T."/>
            <person name="Shibahara T."/>
            <person name="Tanaka T."/>
            <person name="Ishii S."/>
            <person name="Yamamoto J."/>
            <person name="Saito K."/>
            <person name="Kawai Y."/>
            <person name="Isono Y."/>
            <person name="Nakamura Y."/>
            <person name="Nagahari K."/>
            <person name="Murakami K."/>
            <person name="Yasuda T."/>
            <person name="Iwayanagi T."/>
            <person name="Wagatsuma M."/>
            <person name="Shiratori A."/>
            <person name="Sudo H."/>
            <person name="Hosoiri T."/>
            <person name="Kaku Y."/>
            <person name="Kodaira H."/>
            <person name="Kondo H."/>
            <person name="Sugawara M."/>
            <person name="Takahashi M."/>
            <person name="Kanda K."/>
            <person name="Yokoi T."/>
            <person name="Furuya T."/>
            <person name="Kikkawa E."/>
            <person name="Omura Y."/>
            <person name="Abe K."/>
            <person name="Kamihara K."/>
            <person name="Katsuta N."/>
            <person name="Sato K."/>
            <person name="Tanikawa M."/>
            <person name="Yamazaki M."/>
            <person name="Ninomiya K."/>
            <person name="Ishibashi T."/>
            <person name="Yamashita H."/>
            <person name="Murakawa K."/>
            <person name="Fujimori K."/>
            <person name="Tanai H."/>
            <person name="Kimata M."/>
            <person name="Watanabe M."/>
            <person name="Hiraoka S."/>
            <person name="Chiba Y."/>
            <person name="Ishida S."/>
            <person name="Ono Y."/>
            <person name="Takiguchi S."/>
            <person name="Watanabe S."/>
            <person name="Yosida M."/>
            <person name="Hotuta T."/>
            <person name="Kusano J."/>
            <person name="Kanehori K."/>
            <person name="Takahashi-Fujii A."/>
            <person name="Hara H."/>
            <person name="Tanase T.-O."/>
            <person name="Nomura Y."/>
            <person name="Togiya S."/>
            <person name="Komai F."/>
            <person name="Hara R."/>
            <person name="Takeuchi K."/>
            <person name="Arita M."/>
            <person name="Imose N."/>
            <person name="Musashino K."/>
            <person name="Yuuki H."/>
            <person name="Oshima A."/>
            <person name="Sasaki N."/>
            <person name="Aotsuka S."/>
            <person name="Yoshikawa Y."/>
            <person name="Matsunawa H."/>
            <person name="Ichihara T."/>
            <person name="Shiohata N."/>
            <person name="Sano S."/>
            <person name="Moriya S."/>
            <person name="Momiyama H."/>
            <person name="Satoh N."/>
            <person name="Takami S."/>
            <person name="Terashima Y."/>
            <person name="Suzuki O."/>
            <person name="Nakagawa S."/>
            <person name="Senoh A."/>
            <person name="Mizoguchi H."/>
            <person name="Goto Y."/>
            <person name="Shimizu F."/>
            <person name="Wakebe H."/>
            <person name="Hishigaki H."/>
            <person name="Watanabe T."/>
            <person name="Sugiyama A."/>
            <person name="Takemoto M."/>
            <person name="Kawakami B."/>
            <person name="Yamazaki M."/>
            <person name="Watanabe K."/>
            <person name="Kumagai A."/>
            <person name="Itakura S."/>
            <person name="Fukuzumi Y."/>
            <person name="Fujimori Y."/>
            <person name="Komiyama M."/>
            <person name="Tashiro H."/>
            <person name="Tanigami A."/>
            <person name="Fujiwara T."/>
            <person name="Ono T."/>
            <person name="Yamada K."/>
            <person name="Fujii Y."/>
            <person name="Ozaki K."/>
            <person name="Hirao M."/>
            <person name="Ohmori Y."/>
            <person name="Kawabata A."/>
            <person name="Hikiji T."/>
            <person name="Kobatake N."/>
            <person name="Inagaki H."/>
            <person name="Ikema Y."/>
            <person name="Okamoto S."/>
            <person name="Okitani R."/>
            <person name="Kawakami T."/>
            <person name="Noguchi S."/>
            <person name="Itoh T."/>
            <person name="Shigeta K."/>
            <person name="Senba T."/>
            <person name="Matsumura K."/>
            <person name="Nakajima Y."/>
            <person name="Mizuno T."/>
            <person name="Morinaga M."/>
            <person name="Sasaki M."/>
            <person name="Togashi T."/>
            <person name="Oyama M."/>
            <person name="Hata H."/>
            <person name="Watanabe M."/>
            <person name="Komatsu T."/>
            <person name="Mizushima-Sugano J."/>
            <person name="Satoh T."/>
            <person name="Shirai Y."/>
            <person name="Takahashi Y."/>
            <person name="Nakagawa K."/>
            <person name="Okumura K."/>
            <person name="Nagase T."/>
            <person name="Nomura N."/>
            <person name="Kikuchi H."/>
            <person name="Masuho Y."/>
            <person name="Yamashita R."/>
            <person name="Nakai K."/>
            <person name="Yada T."/>
            <person name="Nakamura Y."/>
            <person name="Ohara O."/>
            <person name="Isogai T."/>
            <person name="Sugano S."/>
        </authorList>
    </citation>
    <scope>NUCLEOTIDE SEQUENCE [LARGE SCALE MRNA]</scope>
    <source>
        <tissue>Retinoblastoma</tissue>
    </source>
</reference>
<reference key="2">
    <citation type="submission" date="2004-06" db="EMBL/GenBank/DDBJ databases">
        <title>Cloning of human full open reading frames in Gateway(TM) system entry vector (pDONR201).</title>
        <authorList>
            <person name="Ebert L."/>
            <person name="Schick M."/>
            <person name="Neubert P."/>
            <person name="Schatten R."/>
            <person name="Henze S."/>
            <person name="Korn B."/>
        </authorList>
    </citation>
    <scope>NUCLEOTIDE SEQUENCE [LARGE SCALE MRNA]</scope>
</reference>
<reference key="3">
    <citation type="journal article" date="2004" name="Genome Res.">
        <title>The status, quality, and expansion of the NIH full-length cDNA project: the Mammalian Gene Collection (MGC).</title>
        <authorList>
            <consortium name="The MGC Project Team"/>
        </authorList>
    </citation>
    <scope>NUCLEOTIDE SEQUENCE [LARGE SCALE MRNA]</scope>
    <source>
        <tissue>Skin</tissue>
    </source>
</reference>
<reference key="4">
    <citation type="journal article" date="2004" name="Mol. Cell">
        <title>PHAX and CRM1 are required sequentially to transport U3 snoRNA to nucleoli.</title>
        <authorList>
            <person name="Boulon S."/>
            <person name="Verheggen C."/>
            <person name="Jady B.E."/>
            <person name="Girard C."/>
            <person name="Pescia C."/>
            <person name="Paul C."/>
            <person name="Ospina J.K."/>
            <person name="Kiss T."/>
            <person name="Matera A.G."/>
            <person name="Bordonne R."/>
            <person name="Bertrand E."/>
        </authorList>
    </citation>
    <scope>FUNCTION IN U3 SNORNA TRANSPORT</scope>
    <scope>RNA-BINDING</scope>
    <scope>SUBCELLULAR LOCATION</scope>
</reference>
<reference key="5">
    <citation type="journal article" date="2001" name="RNA">
        <title>The evolutionarily conserved region of the U snRNA export mediator PHAX is a novel RNA-binding domain that is essential for U snRNA export.</title>
        <authorList>
            <person name="Segref A."/>
            <person name="Mattaj I.W."/>
            <person name="Ohno M."/>
        </authorList>
    </citation>
    <scope>SUBCELLULAR LOCATION</scope>
</reference>
<reference key="6">
    <citation type="journal article" date="2004" name="Mol. Cell">
        <title>Assembly and maturation of the U3 snoRNP in the nucleoplasm in a large dynamic multiprotein complex.</title>
        <authorList>
            <person name="Watkins N.J."/>
            <person name="Lemm I."/>
            <person name="Ingelfinger D."/>
            <person name="Schneider C."/>
            <person name="Hossbach M."/>
            <person name="Urlaub H."/>
            <person name="Luehrmann R."/>
        </authorList>
    </citation>
    <scope>FUNCTION IN SNORNA TRANSPORT</scope>
    <scope>IDENTIFICATION IN A COMPLEX WITH U3 SNORNA</scope>
</reference>
<reference key="7">
    <citation type="journal article" date="2008" name="Proc. Natl. Acad. Sci. U.S.A.">
        <title>A quantitative atlas of mitotic phosphorylation.</title>
        <authorList>
            <person name="Dephoure N."/>
            <person name="Zhou C."/>
            <person name="Villen J."/>
            <person name="Beausoleil S.A."/>
            <person name="Bakalarski C.E."/>
            <person name="Elledge S.J."/>
            <person name="Gygi S.P."/>
        </authorList>
    </citation>
    <scope>PHOSPHORYLATION [LARGE SCALE ANALYSIS] AT SER-356</scope>
    <scope>IDENTIFICATION BY MASS SPECTROMETRY [LARGE SCALE ANALYSIS]</scope>
    <source>
        <tissue>Cervix carcinoma</tissue>
    </source>
</reference>
<reference key="8">
    <citation type="journal article" date="2010" name="Sci. Signal.">
        <title>Quantitative phosphoproteomics reveals widespread full phosphorylation site occupancy during mitosis.</title>
        <authorList>
            <person name="Olsen J.V."/>
            <person name="Vermeulen M."/>
            <person name="Santamaria A."/>
            <person name="Kumar C."/>
            <person name="Miller M.L."/>
            <person name="Jensen L.J."/>
            <person name="Gnad F."/>
            <person name="Cox J."/>
            <person name="Jensen T.S."/>
            <person name="Nigg E.A."/>
            <person name="Brunak S."/>
            <person name="Mann M."/>
        </authorList>
    </citation>
    <scope>ACETYLATION [LARGE SCALE ANALYSIS] AT ALA-2</scope>
    <scope>PHOSPHORYLATION [LARGE SCALE ANALYSIS] AT THR-296</scope>
    <scope>CLEAVAGE OF INITIATOR METHIONINE [LARGE SCALE ANALYSIS]</scope>
    <scope>IDENTIFICATION BY MASS SPECTROMETRY [LARGE SCALE ANALYSIS]</scope>
    <source>
        <tissue>Cervix carcinoma</tissue>
    </source>
</reference>
<reference key="9">
    <citation type="journal article" date="2011" name="BMC Syst. Biol.">
        <title>Initial characterization of the human central proteome.</title>
        <authorList>
            <person name="Burkard T.R."/>
            <person name="Planyavsky M."/>
            <person name="Kaupe I."/>
            <person name="Breitwieser F.P."/>
            <person name="Buerckstuemmer T."/>
            <person name="Bennett K.L."/>
            <person name="Superti-Furga G."/>
            <person name="Colinge J."/>
        </authorList>
    </citation>
    <scope>IDENTIFICATION BY MASS SPECTROMETRY [LARGE SCALE ANALYSIS]</scope>
</reference>
<reference key="10">
    <citation type="journal article" date="2011" name="Sci. Signal.">
        <title>System-wide temporal characterization of the proteome and phosphoproteome of human embryonic stem cell differentiation.</title>
        <authorList>
            <person name="Rigbolt K.T."/>
            <person name="Prokhorova T.A."/>
            <person name="Akimov V."/>
            <person name="Henningsen J."/>
            <person name="Johansen P.T."/>
            <person name="Kratchmarova I."/>
            <person name="Kassem M."/>
            <person name="Mann M."/>
            <person name="Olsen J.V."/>
            <person name="Blagoev B."/>
        </authorList>
    </citation>
    <scope>ACETYLATION [LARGE SCALE ANALYSIS] AT ALA-2</scope>
    <scope>PHOSPHORYLATION [LARGE SCALE ANALYSIS] AT SER-14</scope>
    <scope>CLEAVAGE OF INITIATOR METHIONINE [LARGE SCALE ANALYSIS]</scope>
    <scope>IDENTIFICATION BY MASS SPECTROMETRY [LARGE SCALE ANALYSIS]</scope>
</reference>
<reference key="11">
    <citation type="journal article" date="2013" name="J. Proteome Res.">
        <title>Toward a comprehensive characterization of a human cancer cell phosphoproteome.</title>
        <authorList>
            <person name="Zhou H."/>
            <person name="Di Palma S."/>
            <person name="Preisinger C."/>
            <person name="Peng M."/>
            <person name="Polat A.N."/>
            <person name="Heck A.J."/>
            <person name="Mohammed S."/>
        </authorList>
    </citation>
    <scope>PHOSPHORYLATION [LARGE SCALE ANALYSIS] AT SER-368</scope>
    <scope>IDENTIFICATION BY MASS SPECTROMETRY [LARGE SCALE ANALYSIS]</scope>
    <source>
        <tissue>Cervix carcinoma</tissue>
        <tissue>Erythroleukemia</tissue>
    </source>
</reference>
<reference key="12">
    <citation type="journal article" date="2014" name="J. Proteomics">
        <title>An enzyme assisted RP-RPLC approach for in-depth analysis of human liver phosphoproteome.</title>
        <authorList>
            <person name="Bian Y."/>
            <person name="Song C."/>
            <person name="Cheng K."/>
            <person name="Dong M."/>
            <person name="Wang F."/>
            <person name="Huang J."/>
            <person name="Sun D."/>
            <person name="Wang L."/>
            <person name="Ye M."/>
            <person name="Zou H."/>
        </authorList>
    </citation>
    <scope>PHOSPHORYLATION [LARGE SCALE ANALYSIS] AT SER-14 AND SER-16</scope>
    <scope>IDENTIFICATION BY MASS SPECTROMETRY [LARGE SCALE ANALYSIS]</scope>
    <source>
        <tissue>Liver</tissue>
    </source>
</reference>
<reference key="13">
    <citation type="journal article" date="2015" name="Nat. Commun.">
        <title>mRNA export through an additional cap-binding complex consisting of NCBP1 and NCBP3.</title>
        <authorList>
            <person name="Gebhardt A."/>
            <person name="Habjan M."/>
            <person name="Benda C."/>
            <person name="Meiler A."/>
            <person name="Haas D.A."/>
            <person name="Hein M.Y."/>
            <person name="Mann A."/>
            <person name="Mann M."/>
            <person name="Habermann B."/>
            <person name="Pichlmair A."/>
        </authorList>
    </citation>
    <scope>INTERACTION WITH NCBP2</scope>
</reference>
<reference key="14">
    <citation type="journal article" date="2024" name="Nucleic Acids Res.">
        <title>The RNA helicase DDX39 contributes to the nuclear export of spliceosomal U snRNA by loading of PHAX onto RNA.</title>
        <authorList>
            <person name="Taniguchi I."/>
            <person name="Hirose T."/>
            <person name="Ohno M."/>
        </authorList>
    </citation>
    <scope>FUNCTION</scope>
    <scope>INTERACTION WITH DDX39A</scope>
</reference>
<reference key="15">
    <citation type="journal article" date="2010" name="RNA">
        <title>Structure and RNA recognition by the snRNA and snoRNA transport factor PHAX.</title>
        <authorList>
            <person name="Mourao A."/>
            <person name="Varrot A."/>
            <person name="Mackereth C.D."/>
            <person name="Cusack S."/>
            <person name="Sattler M."/>
        </authorList>
    </citation>
    <scope>STRUCTURE BY NMR OF 223-323</scope>
    <scope>RNA-BINDING REGION</scope>
</reference>
<sequence>MALEVGDMEDGQLSDSDSDMTVAPSDRPLQLPKVLGGDSAMRAFQNTATACAPVSHYRAVESVDSSEESFSDSDDDSCLWKRKRQKCFNPPPKPEPFQFGQSSQKPPVAGGKKINNIWGAVLQEQNQDAVATELGILGMEGTIDRSRQSETYNYLLAKKLRKESQEHTKDLDKELDEYMHGGKKMGSKEEENGQGHLKRKRPVKDRLGNRPEMNYKGRYEITAEDSQEKVADEISFRLQEPKKDLIARVVRIIGNKKAIELLMETAEVEQNGGLFIMNGSRRRTPGGVFLNLLKNTPSISEEQIKDIFYIENQKEYENKKAARKRRTQVLGKKMKQAIKSLNFQEDDDTSRETFASDTNEALASLDESQEGHAEAKLEAEEAIEVDHSHDLDIF</sequence>
<name>PHAX_HUMAN</name>
<protein>
    <recommendedName>
        <fullName>Phosphorylated adapter RNA export protein</fullName>
    </recommendedName>
    <alternativeName>
        <fullName>RNA U small nuclear RNA export adapter protein</fullName>
    </alternativeName>
</protein>
<accession>Q9H814</accession>
<accession>Q9H8W1</accession>
<gene>
    <name type="primary">PHAX</name>
    <name type="synonym">RNUXA</name>
</gene>
<evidence type="ECO:0000250" key="1"/>
<evidence type="ECO:0000250" key="2">
    <source>
        <dbReference type="UniProtKB" id="Q63068"/>
    </source>
</evidence>
<evidence type="ECO:0000250" key="3">
    <source>
        <dbReference type="UniProtKB" id="Q9JJT9"/>
    </source>
</evidence>
<evidence type="ECO:0000256" key="4">
    <source>
        <dbReference type="SAM" id="MobiDB-lite"/>
    </source>
</evidence>
<evidence type="ECO:0000269" key="5">
    <source>
    </source>
</evidence>
<evidence type="ECO:0000269" key="6">
    <source>
    </source>
</evidence>
<evidence type="ECO:0000269" key="7">
    <source>
    </source>
</evidence>
<evidence type="ECO:0000269" key="8">
    <source>
    </source>
</evidence>
<evidence type="ECO:0000269" key="9">
    <source>
    </source>
</evidence>
<evidence type="ECO:0000305" key="10"/>
<evidence type="ECO:0007744" key="11">
    <source>
    </source>
</evidence>
<evidence type="ECO:0007744" key="12">
    <source>
    </source>
</evidence>
<evidence type="ECO:0007744" key="13">
    <source>
    </source>
</evidence>
<evidence type="ECO:0007744" key="14">
    <source>
    </source>
</evidence>
<evidence type="ECO:0007744" key="15">
    <source>
    </source>
</evidence>
<evidence type="ECO:0007829" key="16">
    <source>
        <dbReference type="PDB" id="2XC7"/>
    </source>
</evidence>
<feature type="initiator methionine" description="Removed" evidence="12 13">
    <location>
        <position position="1"/>
    </location>
</feature>
<feature type="chain" id="PRO_0000239775" description="Phosphorylated adapter RNA export protein">
    <location>
        <begin position="2"/>
        <end position="394"/>
    </location>
</feature>
<feature type="region of interest" description="Disordered" evidence="4">
    <location>
        <begin position="1"/>
        <end position="33"/>
    </location>
</feature>
<feature type="region of interest" description="Necessary for interaction with CBP80" evidence="1">
    <location>
        <begin position="2"/>
        <end position="329"/>
    </location>
</feature>
<feature type="region of interest" description="Disordered" evidence="4">
    <location>
        <begin position="83"/>
        <end position="111"/>
    </location>
</feature>
<feature type="region of interest" description="Disordered" evidence="4">
    <location>
        <begin position="183"/>
        <end position="211"/>
    </location>
</feature>
<feature type="region of interest" description="Sufficient for poly U RNA-binding">
    <location>
        <begin position="228"/>
        <end position="328"/>
    </location>
</feature>
<feature type="region of interest" description="Necessary for poly U RNA-binding and snRNA export" evidence="1">
    <location>
        <begin position="279"/>
        <end position="287"/>
    </location>
</feature>
<feature type="short sequence motif" description="Nuclear localization signal" evidence="1">
    <location>
        <begin position="81"/>
        <end position="84"/>
    </location>
</feature>
<feature type="short sequence motif" description="Nuclear export signal" evidence="1">
    <location>
        <begin position="130"/>
        <end position="139"/>
    </location>
</feature>
<feature type="short sequence motif" description="Nuclear localization signal" evidence="1">
    <location>
        <begin position="198"/>
        <end position="201"/>
    </location>
</feature>
<feature type="compositionally biased region" description="Acidic residues" evidence="4">
    <location>
        <begin position="1"/>
        <end position="18"/>
    </location>
</feature>
<feature type="compositionally biased region" description="Basic and acidic residues" evidence="4">
    <location>
        <begin position="183"/>
        <end position="193"/>
    </location>
</feature>
<feature type="modified residue" description="N-acetylalanine" evidence="12 13">
    <location>
        <position position="2"/>
    </location>
</feature>
<feature type="modified residue" description="Phosphoserine" evidence="13 15">
    <location>
        <position position="14"/>
    </location>
</feature>
<feature type="modified residue" description="Phosphoserine" evidence="15">
    <location>
        <position position="16"/>
    </location>
</feature>
<feature type="modified residue" description="Phosphoserine" evidence="2">
    <location>
        <position position="65"/>
    </location>
</feature>
<feature type="modified residue" description="Phosphoserine" evidence="2">
    <location>
        <position position="66"/>
    </location>
</feature>
<feature type="modified residue" description="Phosphoserine" evidence="2">
    <location>
        <position position="69"/>
    </location>
</feature>
<feature type="modified residue" description="Phosphoserine" evidence="2">
    <location>
        <position position="73"/>
    </location>
</feature>
<feature type="modified residue" description="Phosphoserine" evidence="2">
    <location>
        <position position="226"/>
    </location>
</feature>
<feature type="modified residue" description="Phosphothreonine" evidence="12">
    <location>
        <position position="296"/>
    </location>
</feature>
<feature type="modified residue" description="Phosphoserine" evidence="11">
    <location>
        <position position="356"/>
    </location>
</feature>
<feature type="modified residue" description="Phosphoserine" evidence="14">
    <location>
        <position position="368"/>
    </location>
</feature>
<feature type="sequence variant" id="VAR_051871" description="In dbSNP:rs3734173.">
    <original>R</original>
    <variation>C</variation>
    <location>
        <position position="82"/>
    </location>
</feature>
<feature type="sequence conflict" description="In Ref. 1; BAB14489." evidence="10" ref="1">
    <original>G</original>
    <variation>A</variation>
    <location>
        <position position="141"/>
    </location>
</feature>
<feature type="sequence conflict" description="In Ref. 1; BAB14489." evidence="10" ref="1">
    <original>D</original>
    <variation>A</variation>
    <location>
        <position position="346"/>
    </location>
</feature>
<feature type="helix" evidence="16">
    <location>
        <begin position="227"/>
        <end position="237"/>
    </location>
</feature>
<feature type="helix" evidence="16">
    <location>
        <begin position="243"/>
        <end position="253"/>
    </location>
</feature>
<feature type="helix" evidence="16">
    <location>
        <begin position="255"/>
        <end position="271"/>
    </location>
</feature>
<feature type="strand" evidence="16">
    <location>
        <begin position="277"/>
        <end position="281"/>
    </location>
</feature>
<feature type="helix" evidence="16">
    <location>
        <begin position="285"/>
        <end position="295"/>
    </location>
</feature>
<feature type="helix" evidence="16">
    <location>
        <begin position="301"/>
        <end position="308"/>
    </location>
</feature>
<keyword id="KW-0002">3D-structure</keyword>
<keyword id="KW-0007">Acetylation</keyword>
<keyword id="KW-0963">Cytoplasm</keyword>
<keyword id="KW-0539">Nucleus</keyword>
<keyword id="KW-0597">Phosphoprotein</keyword>
<keyword id="KW-0653">Protein transport</keyword>
<keyword id="KW-1267">Proteomics identification</keyword>
<keyword id="KW-1185">Reference proteome</keyword>
<keyword id="KW-0694">RNA-binding</keyword>
<keyword id="KW-0813">Transport</keyword>
<dbReference type="EMBL" id="AK023255">
    <property type="protein sequence ID" value="BAB14489.1"/>
    <property type="molecule type" value="mRNA"/>
</dbReference>
<dbReference type="EMBL" id="AK024065">
    <property type="protein sequence ID" value="BAB14809.1"/>
    <property type="molecule type" value="mRNA"/>
</dbReference>
<dbReference type="EMBL" id="CR457305">
    <property type="protein sequence ID" value="CAG33586.1"/>
    <property type="molecule type" value="mRNA"/>
</dbReference>
<dbReference type="EMBL" id="BC021161">
    <property type="protein sequence ID" value="AAH21161.1"/>
    <property type="molecule type" value="mRNA"/>
</dbReference>
<dbReference type="CCDS" id="CCDS4138.1"/>
<dbReference type="RefSeq" id="NP_115553.2">
    <property type="nucleotide sequence ID" value="NM_032177.4"/>
</dbReference>
<dbReference type="PDB" id="2XC7">
    <property type="method" value="NMR"/>
    <property type="chains" value="A=223-323"/>
</dbReference>
<dbReference type="PDB" id="8PNT">
    <property type="method" value="EM"/>
    <property type="resolution" value="3.46 A"/>
    <property type="chains" value="C/D=1-394"/>
</dbReference>
<dbReference type="PDBsum" id="2XC7"/>
<dbReference type="PDBsum" id="8PNT"/>
<dbReference type="EMDB" id="EMD-17784"/>
<dbReference type="SMR" id="Q9H814"/>
<dbReference type="BioGRID" id="119734">
    <property type="interactions" value="212"/>
</dbReference>
<dbReference type="CORUM" id="Q9H814"/>
<dbReference type="FunCoup" id="Q9H814">
    <property type="interactions" value="2983"/>
</dbReference>
<dbReference type="IntAct" id="Q9H814">
    <property type="interactions" value="94"/>
</dbReference>
<dbReference type="MINT" id="Q9H814"/>
<dbReference type="STRING" id="9606.ENSP00000297540"/>
<dbReference type="TCDB" id="9.A.60.1.1">
    <property type="family name" value="the small nuclear rna exporter (snrna-e) family"/>
</dbReference>
<dbReference type="GlyGen" id="Q9H814">
    <property type="glycosylation" value="1 site, 1 O-linked glycan (1 site)"/>
</dbReference>
<dbReference type="iPTMnet" id="Q9H814"/>
<dbReference type="PhosphoSitePlus" id="Q9H814"/>
<dbReference type="BioMuta" id="PHAX"/>
<dbReference type="DMDM" id="74752718"/>
<dbReference type="jPOST" id="Q9H814"/>
<dbReference type="MassIVE" id="Q9H814"/>
<dbReference type="PaxDb" id="9606-ENSP00000297540"/>
<dbReference type="PeptideAtlas" id="Q9H814"/>
<dbReference type="ProteomicsDB" id="81168"/>
<dbReference type="Pumba" id="Q9H814"/>
<dbReference type="Antibodypedia" id="45036">
    <property type="antibodies" value="196 antibodies from 27 providers"/>
</dbReference>
<dbReference type="DNASU" id="51808"/>
<dbReference type="Ensembl" id="ENST00000297540.5">
    <property type="protein sequence ID" value="ENSP00000297540.4"/>
    <property type="gene ID" value="ENSG00000164902.14"/>
</dbReference>
<dbReference type="GeneID" id="51808"/>
<dbReference type="KEGG" id="hsa:51808"/>
<dbReference type="MANE-Select" id="ENST00000297540.5">
    <property type="protein sequence ID" value="ENSP00000297540.4"/>
    <property type="RefSeq nucleotide sequence ID" value="NM_032177.4"/>
    <property type="RefSeq protein sequence ID" value="NP_115553.2"/>
</dbReference>
<dbReference type="UCSC" id="uc003kua.3">
    <property type="organism name" value="human"/>
</dbReference>
<dbReference type="AGR" id="HGNC:10241"/>
<dbReference type="CTD" id="51808"/>
<dbReference type="DisGeNET" id="51808"/>
<dbReference type="GeneCards" id="PHAX"/>
<dbReference type="HGNC" id="HGNC:10241">
    <property type="gene designation" value="PHAX"/>
</dbReference>
<dbReference type="HPA" id="ENSG00000164902">
    <property type="expression patterns" value="Low tissue specificity"/>
</dbReference>
<dbReference type="MIM" id="604924">
    <property type="type" value="gene"/>
</dbReference>
<dbReference type="neXtProt" id="NX_Q9H814"/>
<dbReference type="OpenTargets" id="ENSG00000164902"/>
<dbReference type="PharmGKB" id="PA164724444"/>
<dbReference type="VEuPathDB" id="HostDB:ENSG00000164902"/>
<dbReference type="eggNOG" id="KOG3948">
    <property type="taxonomic scope" value="Eukaryota"/>
</dbReference>
<dbReference type="GeneTree" id="ENSGT00390000011084"/>
<dbReference type="HOGENOM" id="CLU_058840_1_0_1"/>
<dbReference type="InParanoid" id="Q9H814"/>
<dbReference type="OMA" id="EEGCIKK"/>
<dbReference type="OrthoDB" id="20573at2759"/>
<dbReference type="PAN-GO" id="Q9H814">
    <property type="GO annotations" value="2 GO annotations based on evolutionary models"/>
</dbReference>
<dbReference type="PhylomeDB" id="Q9H814"/>
<dbReference type="TreeFam" id="TF321050"/>
<dbReference type="PathwayCommons" id="Q9H814"/>
<dbReference type="Reactome" id="R-HSA-191859">
    <property type="pathway name" value="snRNP Assembly"/>
</dbReference>
<dbReference type="Reactome" id="R-HSA-6807505">
    <property type="pathway name" value="RNA polymerase II transcribes snRNA genes"/>
</dbReference>
<dbReference type="SignaLink" id="Q9H814"/>
<dbReference type="BioGRID-ORCS" id="51808">
    <property type="hits" value="778 hits in 1158 CRISPR screens"/>
</dbReference>
<dbReference type="CD-CODE" id="91857CE7">
    <property type="entry name" value="Nucleolus"/>
</dbReference>
<dbReference type="ChiTaRS" id="PHAX">
    <property type="organism name" value="human"/>
</dbReference>
<dbReference type="EvolutionaryTrace" id="Q9H814"/>
<dbReference type="GeneWiki" id="RNUXA"/>
<dbReference type="GenomeRNAi" id="51808"/>
<dbReference type="Pharos" id="Q9H814">
    <property type="development level" value="Tbio"/>
</dbReference>
<dbReference type="PRO" id="PR:Q9H814"/>
<dbReference type="Proteomes" id="UP000005640">
    <property type="component" value="Chromosome 5"/>
</dbReference>
<dbReference type="RNAct" id="Q9H814">
    <property type="molecule type" value="protein"/>
</dbReference>
<dbReference type="Bgee" id="ENSG00000164902">
    <property type="expression patterns" value="Expressed in buccal mucosa cell and 197 other cell types or tissues"/>
</dbReference>
<dbReference type="GO" id="GO:0015030">
    <property type="term" value="C:Cajal body"/>
    <property type="evidence" value="ECO:0007669"/>
    <property type="project" value="UniProtKB-SubCell"/>
</dbReference>
<dbReference type="GO" id="GO:0005829">
    <property type="term" value="C:cytosol"/>
    <property type="evidence" value="ECO:0000304"/>
    <property type="project" value="Reactome"/>
</dbReference>
<dbReference type="GO" id="GO:0043025">
    <property type="term" value="C:neuronal cell body"/>
    <property type="evidence" value="ECO:0007669"/>
    <property type="project" value="Ensembl"/>
</dbReference>
<dbReference type="GO" id="GO:0005654">
    <property type="term" value="C:nucleoplasm"/>
    <property type="evidence" value="ECO:0000314"/>
    <property type="project" value="HPA"/>
</dbReference>
<dbReference type="GO" id="GO:0005634">
    <property type="term" value="C:nucleus"/>
    <property type="evidence" value="ECO:0000318"/>
    <property type="project" value="GO_Central"/>
</dbReference>
<dbReference type="GO" id="GO:1990904">
    <property type="term" value="C:ribonucleoprotein complex"/>
    <property type="evidence" value="ECO:0000314"/>
    <property type="project" value="FlyBase"/>
</dbReference>
<dbReference type="GO" id="GO:0140262">
    <property type="term" value="F:mRNA cap binding complex binding"/>
    <property type="evidence" value="ECO:0000314"/>
    <property type="project" value="FlyBase"/>
</dbReference>
<dbReference type="GO" id="GO:0003723">
    <property type="term" value="F:RNA binding"/>
    <property type="evidence" value="ECO:0007669"/>
    <property type="project" value="UniProtKB-KW"/>
</dbReference>
<dbReference type="GO" id="GO:0015643">
    <property type="term" value="F:toxic substance binding"/>
    <property type="evidence" value="ECO:0007669"/>
    <property type="project" value="Ensembl"/>
</dbReference>
<dbReference type="GO" id="GO:0015031">
    <property type="term" value="P:protein transport"/>
    <property type="evidence" value="ECO:0007669"/>
    <property type="project" value="UniProtKB-KW"/>
</dbReference>
<dbReference type="GO" id="GO:0043489">
    <property type="term" value="P:RNA stabilization"/>
    <property type="evidence" value="ECO:0000315"/>
    <property type="project" value="FlyBase"/>
</dbReference>
<dbReference type="GO" id="GO:0006408">
    <property type="term" value="P:snRNA export from nucleus"/>
    <property type="evidence" value="ECO:0000318"/>
    <property type="project" value="GO_Central"/>
</dbReference>
<dbReference type="FunFam" id="1.10.10.1440:FF:000001">
    <property type="entry name" value="phosphorylated adapter RNA export protein-like"/>
    <property type="match status" value="1"/>
</dbReference>
<dbReference type="Gene3D" id="1.10.10.1440">
    <property type="entry name" value="PHAX RNA-binding domain"/>
    <property type="match status" value="1"/>
</dbReference>
<dbReference type="InterPro" id="IPR039047">
    <property type="entry name" value="PHAX"/>
</dbReference>
<dbReference type="InterPro" id="IPR019385">
    <property type="entry name" value="PHAX_RNA-binding_domain"/>
</dbReference>
<dbReference type="InterPro" id="IPR038092">
    <property type="entry name" value="PHAX_RNA-binding_sf"/>
</dbReference>
<dbReference type="PANTHER" id="PTHR13135">
    <property type="entry name" value="CYTOSOLIC RESINIFERATOXIN BINDING PROTEIN RBP-26"/>
    <property type="match status" value="1"/>
</dbReference>
<dbReference type="PANTHER" id="PTHR13135:SF0">
    <property type="entry name" value="PHOSPHORYLATED ADAPTER RNA EXPORT PROTEIN"/>
    <property type="match status" value="1"/>
</dbReference>
<dbReference type="Pfam" id="PF10258">
    <property type="entry name" value="PHAX_RNA-bd"/>
    <property type="match status" value="1"/>
</dbReference>
<comment type="function">
    <text evidence="1 6 7">A phosphoprotein adapter involved in the XPO1-mediated U snRNA export from the nucleus (PubMed:39011894). Bridge components required for U snRNA export, the cap binding complex (CBC)-bound snRNA on the one hand and the GTPase Ran in its active GTP-bound form together with the export receptor XPO1 on the other. Its phosphorylation in the nucleus is required for U snRNA export complex assembly and export, while its dephosphorylation in the cytoplasm causes export complex disassembly. It is recycled back to the nucleus via the importin alpha/beta heterodimeric import receptor. The directionality of nuclear export is thought to be conferred by an asymmetric distribution of the GTP- and GDP-bound forms of Ran between the cytoplasm and nucleus. Its compartmentalized phosphorylation cycle may also contribute to the directionality of export. Binds strongly to m7G-capped U1 and U5 small nuclear RNAs (snRNAs) in a sequence-unspecific manner and phosphorylation-independent manner (By similarity). Also plays a role in the biogenesis of U3 small nucleolar RNA (snoRNA). Involved in the U3 snoRNA transport from nucleoplasm to Cajal bodies. Binds strongly to m7G-capped U3, U8 and U13 precursor snoRNAs and weakly to trimethylated (TMG)-capped U3, U8 and U13 snoRNAs. Also binds to telomerase RNA.</text>
</comment>
<comment type="subunit">
    <text evidence="3 7 8 9">Found in a U snRNA export complex with PHAX/RNUXA, NCBP1/CBP80, NCBP2/CBP20, RAN, XPO1 and m7G-capped RNA. Part of a precomplex with PHAX/RNUXA, NCBP1/CBP80, NCBP2/CBP20 and m7G-capped RNA. Interacts with NCBP1/CBP80 (By similarity). Found in a complex with snoRNA. Interacts with NCBP2/CBP20 (PubMed:26382858). Interacts with DDX39A; this interaction stimulates PHAX RNA binding activity (PubMed:39011894).</text>
</comment>
<comment type="subcellular location">
    <subcellularLocation>
        <location evidence="5 6">Nucleus</location>
        <location evidence="5 6">Nucleoplasm</location>
    </subcellularLocation>
    <subcellularLocation>
        <location evidence="6">Nucleus</location>
        <location evidence="6">Cajal body</location>
    </subcellularLocation>
    <subcellularLocation>
        <location evidence="5">Cytoplasm</location>
    </subcellularLocation>
    <text evidence="5 6">Located in the nucleoplasm and Cajal bodies. Shuttles between the nucleus and the cytoplasm. Shuttles between the nucleoplasm and Cajal bodies.</text>
</comment>
<comment type="PTM">
    <text evidence="1">Phosphorylated in the nucleus. Dephosphorylated in the cytoplasm (By similarity).</text>
</comment>
<comment type="similarity">
    <text evidence="10">Belongs to the PHAX family.</text>
</comment>
<organism>
    <name type="scientific">Homo sapiens</name>
    <name type="common">Human</name>
    <dbReference type="NCBI Taxonomy" id="9606"/>
    <lineage>
        <taxon>Eukaryota</taxon>
        <taxon>Metazoa</taxon>
        <taxon>Chordata</taxon>
        <taxon>Craniata</taxon>
        <taxon>Vertebrata</taxon>
        <taxon>Euteleostomi</taxon>
        <taxon>Mammalia</taxon>
        <taxon>Eutheria</taxon>
        <taxon>Euarchontoglires</taxon>
        <taxon>Primates</taxon>
        <taxon>Haplorrhini</taxon>
        <taxon>Catarrhini</taxon>
        <taxon>Hominidae</taxon>
        <taxon>Homo</taxon>
    </lineage>
</organism>
<proteinExistence type="evidence at protein level"/>